<accession>Q5X703</accession>
<keyword id="KW-0004">4Fe-4S</keyword>
<keyword id="KW-0963">Cytoplasm</keyword>
<keyword id="KW-0408">Iron</keyword>
<keyword id="KW-0411">Iron-sulfur</keyword>
<keyword id="KW-0479">Metal-binding</keyword>
<keyword id="KW-0949">S-adenosyl-L-methionine</keyword>
<keyword id="KW-0808">Transferase</keyword>
<protein>
    <recommendedName>
        <fullName evidence="1">Lipoyl synthase</fullName>
        <ecNumber evidence="1">2.8.1.8</ecNumber>
    </recommendedName>
    <alternativeName>
        <fullName evidence="1">Lip-syn</fullName>
        <shortName evidence="1">LS</shortName>
    </alternativeName>
    <alternativeName>
        <fullName evidence="1">Lipoate synthase</fullName>
    </alternativeName>
    <alternativeName>
        <fullName evidence="1">Lipoic acid synthase</fullName>
    </alternativeName>
    <alternativeName>
        <fullName evidence="1">Sulfur insertion protein LipA</fullName>
    </alternativeName>
</protein>
<sequence>MGKLIDIPIVVESGQKYKTSQGVTAIKDGIKSSGQDHERLPKPKWLRIVNHTTPAYSQVKEQVQKHRLATVCEEAKCPNISECWSHGTATIMLMGAVCTRACRFCSVDTGNPHGWLDAEEPENTAETVALMNLDYVVLTSVNRDDLPDGGANHYAKTIRAIKKRSPRTKVEALTPDFQGSERDVAVLLDSGVDVFAQNVETVERLTHPVRDNRAGYQQTLNVLAFAKKYRPDVLTKTSLMLGLGETDEEIIQTMDDLRTHHVDILTLGQYLQPTKNHLPIARYVTPETFSELRQIGLKKGFFEVASGPLVRSSYRADRVFKRDNLGLDV</sequence>
<proteinExistence type="inferred from homology"/>
<evidence type="ECO:0000255" key="1">
    <source>
        <dbReference type="HAMAP-Rule" id="MF_00206"/>
    </source>
</evidence>
<evidence type="ECO:0000255" key="2">
    <source>
        <dbReference type="PROSITE-ProRule" id="PRU01266"/>
    </source>
</evidence>
<gene>
    <name evidence="1" type="primary">lipA</name>
    <name type="ordered locus">lpp0810</name>
</gene>
<organism>
    <name type="scientific">Legionella pneumophila (strain Paris)</name>
    <dbReference type="NCBI Taxonomy" id="297246"/>
    <lineage>
        <taxon>Bacteria</taxon>
        <taxon>Pseudomonadati</taxon>
        <taxon>Pseudomonadota</taxon>
        <taxon>Gammaproteobacteria</taxon>
        <taxon>Legionellales</taxon>
        <taxon>Legionellaceae</taxon>
        <taxon>Legionella</taxon>
    </lineage>
</organism>
<comment type="function">
    <text evidence="1">Catalyzes the radical-mediated insertion of two sulfur atoms into the C-6 and C-8 positions of the octanoyl moiety bound to the lipoyl domains of lipoate-dependent enzymes, thereby converting the octanoylated domains into lipoylated derivatives.</text>
</comment>
<comment type="catalytic activity">
    <reaction evidence="1">
        <text>[[Fe-S] cluster scaffold protein carrying a second [4Fe-4S](2+) cluster] + N(6)-octanoyl-L-lysyl-[protein] + 2 oxidized [2Fe-2S]-[ferredoxin] + 2 S-adenosyl-L-methionine + 4 H(+) = [[Fe-S] cluster scaffold protein] + N(6)-[(R)-dihydrolipoyl]-L-lysyl-[protein] + 4 Fe(3+) + 2 hydrogen sulfide + 2 5'-deoxyadenosine + 2 L-methionine + 2 reduced [2Fe-2S]-[ferredoxin]</text>
        <dbReference type="Rhea" id="RHEA:16585"/>
        <dbReference type="Rhea" id="RHEA-COMP:9928"/>
        <dbReference type="Rhea" id="RHEA-COMP:10000"/>
        <dbReference type="Rhea" id="RHEA-COMP:10001"/>
        <dbReference type="Rhea" id="RHEA-COMP:10475"/>
        <dbReference type="Rhea" id="RHEA-COMP:14568"/>
        <dbReference type="Rhea" id="RHEA-COMP:14569"/>
        <dbReference type="ChEBI" id="CHEBI:15378"/>
        <dbReference type="ChEBI" id="CHEBI:17319"/>
        <dbReference type="ChEBI" id="CHEBI:29034"/>
        <dbReference type="ChEBI" id="CHEBI:29919"/>
        <dbReference type="ChEBI" id="CHEBI:33722"/>
        <dbReference type="ChEBI" id="CHEBI:33737"/>
        <dbReference type="ChEBI" id="CHEBI:33738"/>
        <dbReference type="ChEBI" id="CHEBI:57844"/>
        <dbReference type="ChEBI" id="CHEBI:59789"/>
        <dbReference type="ChEBI" id="CHEBI:78809"/>
        <dbReference type="ChEBI" id="CHEBI:83100"/>
        <dbReference type="EC" id="2.8.1.8"/>
    </reaction>
</comment>
<comment type="cofactor">
    <cofactor evidence="1">
        <name>[4Fe-4S] cluster</name>
        <dbReference type="ChEBI" id="CHEBI:49883"/>
    </cofactor>
    <text evidence="1">Binds 2 [4Fe-4S] clusters per subunit. One cluster is coordinated with 3 cysteines and an exchangeable S-adenosyl-L-methionine.</text>
</comment>
<comment type="pathway">
    <text evidence="1">Protein modification; protein lipoylation via endogenous pathway; protein N(6)-(lipoyl)lysine from octanoyl-[acyl-carrier-protein]: step 2/2.</text>
</comment>
<comment type="subcellular location">
    <subcellularLocation>
        <location evidence="1">Cytoplasm</location>
    </subcellularLocation>
</comment>
<comment type="similarity">
    <text evidence="1">Belongs to the radical SAM superfamily. Lipoyl synthase family.</text>
</comment>
<reference key="1">
    <citation type="journal article" date="2004" name="Nat. Genet.">
        <title>Evidence in the Legionella pneumophila genome for exploitation of host cell functions and high genome plasticity.</title>
        <authorList>
            <person name="Cazalet C."/>
            <person name="Rusniok C."/>
            <person name="Brueggemann H."/>
            <person name="Zidane N."/>
            <person name="Magnier A."/>
            <person name="Ma L."/>
            <person name="Tichit M."/>
            <person name="Jarraud S."/>
            <person name="Bouchier C."/>
            <person name="Vandenesch F."/>
            <person name="Kunst F."/>
            <person name="Etienne J."/>
            <person name="Glaser P."/>
            <person name="Buchrieser C."/>
        </authorList>
    </citation>
    <scope>NUCLEOTIDE SEQUENCE [LARGE SCALE GENOMIC DNA]</scope>
    <source>
        <strain>Paris</strain>
    </source>
</reference>
<name>LIPA_LEGPA</name>
<dbReference type="EC" id="2.8.1.8" evidence="1"/>
<dbReference type="EMBL" id="CR628336">
    <property type="protein sequence ID" value="CAH11958.1"/>
    <property type="molecule type" value="Genomic_DNA"/>
</dbReference>
<dbReference type="RefSeq" id="WP_010946482.1">
    <property type="nucleotide sequence ID" value="NC_006368.1"/>
</dbReference>
<dbReference type="SMR" id="Q5X703"/>
<dbReference type="GeneID" id="57034737"/>
<dbReference type="KEGG" id="lpp:lpp0810"/>
<dbReference type="LegioList" id="lpp0810"/>
<dbReference type="HOGENOM" id="CLU_033144_2_0_6"/>
<dbReference type="UniPathway" id="UPA00538">
    <property type="reaction ID" value="UER00593"/>
</dbReference>
<dbReference type="GO" id="GO:0005737">
    <property type="term" value="C:cytoplasm"/>
    <property type="evidence" value="ECO:0007669"/>
    <property type="project" value="UniProtKB-SubCell"/>
</dbReference>
<dbReference type="GO" id="GO:0051539">
    <property type="term" value="F:4 iron, 4 sulfur cluster binding"/>
    <property type="evidence" value="ECO:0007669"/>
    <property type="project" value="UniProtKB-UniRule"/>
</dbReference>
<dbReference type="GO" id="GO:0016992">
    <property type="term" value="F:lipoate synthase activity"/>
    <property type="evidence" value="ECO:0007669"/>
    <property type="project" value="UniProtKB-UniRule"/>
</dbReference>
<dbReference type="GO" id="GO:0046872">
    <property type="term" value="F:metal ion binding"/>
    <property type="evidence" value="ECO:0007669"/>
    <property type="project" value="UniProtKB-KW"/>
</dbReference>
<dbReference type="CDD" id="cd01335">
    <property type="entry name" value="Radical_SAM"/>
    <property type="match status" value="1"/>
</dbReference>
<dbReference type="FunFam" id="3.20.20.70:FF:000040">
    <property type="entry name" value="Lipoyl synthase"/>
    <property type="match status" value="1"/>
</dbReference>
<dbReference type="Gene3D" id="3.20.20.70">
    <property type="entry name" value="Aldolase class I"/>
    <property type="match status" value="1"/>
</dbReference>
<dbReference type="HAMAP" id="MF_00206">
    <property type="entry name" value="Lipoyl_synth"/>
    <property type="match status" value="1"/>
</dbReference>
<dbReference type="InterPro" id="IPR013785">
    <property type="entry name" value="Aldolase_TIM"/>
</dbReference>
<dbReference type="InterPro" id="IPR006638">
    <property type="entry name" value="Elp3/MiaA/NifB-like_rSAM"/>
</dbReference>
<dbReference type="InterPro" id="IPR003698">
    <property type="entry name" value="Lipoyl_synth"/>
</dbReference>
<dbReference type="InterPro" id="IPR007197">
    <property type="entry name" value="rSAM"/>
</dbReference>
<dbReference type="NCBIfam" id="TIGR00510">
    <property type="entry name" value="lipA"/>
    <property type="match status" value="1"/>
</dbReference>
<dbReference type="NCBIfam" id="NF004019">
    <property type="entry name" value="PRK05481.1"/>
    <property type="match status" value="1"/>
</dbReference>
<dbReference type="NCBIfam" id="NF009544">
    <property type="entry name" value="PRK12928.1"/>
    <property type="match status" value="1"/>
</dbReference>
<dbReference type="PANTHER" id="PTHR10949">
    <property type="entry name" value="LIPOYL SYNTHASE"/>
    <property type="match status" value="1"/>
</dbReference>
<dbReference type="PANTHER" id="PTHR10949:SF0">
    <property type="entry name" value="LIPOYL SYNTHASE, MITOCHONDRIAL"/>
    <property type="match status" value="1"/>
</dbReference>
<dbReference type="Pfam" id="PF04055">
    <property type="entry name" value="Radical_SAM"/>
    <property type="match status" value="1"/>
</dbReference>
<dbReference type="PIRSF" id="PIRSF005963">
    <property type="entry name" value="Lipoyl_synth"/>
    <property type="match status" value="1"/>
</dbReference>
<dbReference type="SFLD" id="SFLDF00271">
    <property type="entry name" value="lipoyl_synthase"/>
    <property type="match status" value="1"/>
</dbReference>
<dbReference type="SFLD" id="SFLDG01058">
    <property type="entry name" value="lipoyl_synthase_like"/>
    <property type="match status" value="1"/>
</dbReference>
<dbReference type="SMART" id="SM00729">
    <property type="entry name" value="Elp3"/>
    <property type="match status" value="1"/>
</dbReference>
<dbReference type="SUPFAM" id="SSF102114">
    <property type="entry name" value="Radical SAM enzymes"/>
    <property type="match status" value="1"/>
</dbReference>
<dbReference type="PROSITE" id="PS51918">
    <property type="entry name" value="RADICAL_SAM"/>
    <property type="match status" value="1"/>
</dbReference>
<feature type="chain" id="PRO_0000325269" description="Lipoyl synthase">
    <location>
        <begin position="1"/>
        <end position="329"/>
    </location>
</feature>
<feature type="domain" description="Radical SAM core" evidence="2">
    <location>
        <begin position="83"/>
        <end position="303"/>
    </location>
</feature>
<feature type="binding site" evidence="1">
    <location>
        <position position="72"/>
    </location>
    <ligand>
        <name>[4Fe-4S] cluster</name>
        <dbReference type="ChEBI" id="CHEBI:49883"/>
        <label>1</label>
    </ligand>
</feature>
<feature type="binding site" evidence="1">
    <location>
        <position position="77"/>
    </location>
    <ligand>
        <name>[4Fe-4S] cluster</name>
        <dbReference type="ChEBI" id="CHEBI:49883"/>
        <label>1</label>
    </ligand>
</feature>
<feature type="binding site" evidence="1">
    <location>
        <position position="83"/>
    </location>
    <ligand>
        <name>[4Fe-4S] cluster</name>
        <dbReference type="ChEBI" id="CHEBI:49883"/>
        <label>1</label>
    </ligand>
</feature>
<feature type="binding site" evidence="1">
    <location>
        <position position="98"/>
    </location>
    <ligand>
        <name>[4Fe-4S] cluster</name>
        <dbReference type="ChEBI" id="CHEBI:49883"/>
        <label>2</label>
        <note>4Fe-4S-S-AdoMet</note>
    </ligand>
</feature>
<feature type="binding site" evidence="1">
    <location>
        <position position="102"/>
    </location>
    <ligand>
        <name>[4Fe-4S] cluster</name>
        <dbReference type="ChEBI" id="CHEBI:49883"/>
        <label>2</label>
        <note>4Fe-4S-S-AdoMet</note>
    </ligand>
</feature>
<feature type="binding site" evidence="1">
    <location>
        <position position="105"/>
    </location>
    <ligand>
        <name>[4Fe-4S] cluster</name>
        <dbReference type="ChEBI" id="CHEBI:49883"/>
        <label>2</label>
        <note>4Fe-4S-S-AdoMet</note>
    </ligand>
</feature>
<feature type="binding site" evidence="1">
    <location>
        <position position="313"/>
    </location>
    <ligand>
        <name>[4Fe-4S] cluster</name>
        <dbReference type="ChEBI" id="CHEBI:49883"/>
        <label>1</label>
    </ligand>
</feature>